<dbReference type="EMBL" id="HE601486">
    <property type="protein sequence ID" value="CAP23314.3"/>
    <property type="molecule type" value="Genomic_DNA"/>
</dbReference>
<dbReference type="SMR" id="Q622B7"/>
<dbReference type="FunCoup" id="Q622B7">
    <property type="interactions" value="1771"/>
</dbReference>
<dbReference type="STRING" id="6238.Q622B7"/>
<dbReference type="EnsemblMetazoa" id="CBG02259.1">
    <property type="protein sequence ID" value="CBG02259.1"/>
    <property type="gene ID" value="WBGene00025340"/>
</dbReference>
<dbReference type="KEGG" id="cbr:CBG_02259"/>
<dbReference type="CTD" id="8581802"/>
<dbReference type="WormBase" id="CBG02259">
    <property type="protein sequence ID" value="CBP00555"/>
    <property type="gene ID" value="WBGene00025340"/>
    <property type="gene designation" value="Cbr-tct-1"/>
</dbReference>
<dbReference type="eggNOG" id="KOG1727">
    <property type="taxonomic scope" value="Eukaryota"/>
</dbReference>
<dbReference type="HOGENOM" id="CLU_095877_1_1_1"/>
<dbReference type="InParanoid" id="Q622B7"/>
<dbReference type="OMA" id="CAMITEG"/>
<dbReference type="Proteomes" id="UP000008549">
    <property type="component" value="Unassembled WGS sequence"/>
</dbReference>
<dbReference type="GO" id="GO:0005737">
    <property type="term" value="C:cytoplasm"/>
    <property type="evidence" value="ECO:0000318"/>
    <property type="project" value="GO_Central"/>
</dbReference>
<dbReference type="GO" id="GO:0005509">
    <property type="term" value="F:calcium ion binding"/>
    <property type="evidence" value="ECO:0000318"/>
    <property type="project" value="GO_Central"/>
</dbReference>
<dbReference type="FunFam" id="2.170.150.10:FF:000010">
    <property type="entry name" value="Translationally-controlled tumor protein homolog"/>
    <property type="match status" value="1"/>
</dbReference>
<dbReference type="Gene3D" id="2.170.150.10">
    <property type="entry name" value="Metal Binding Protein, Guanine Nucleotide Exchange Factor, Chain A"/>
    <property type="match status" value="1"/>
</dbReference>
<dbReference type="InterPro" id="IPR011057">
    <property type="entry name" value="Mss4-like_sf"/>
</dbReference>
<dbReference type="InterPro" id="IPR011323">
    <property type="entry name" value="Mss4/transl-control_tumour"/>
</dbReference>
<dbReference type="InterPro" id="IPR034737">
    <property type="entry name" value="TCTP"/>
</dbReference>
<dbReference type="InterPro" id="IPR018103">
    <property type="entry name" value="Translation_control_tumour_CS"/>
</dbReference>
<dbReference type="InterPro" id="IPR018105">
    <property type="entry name" value="Translational_control_tumour_p"/>
</dbReference>
<dbReference type="PANTHER" id="PTHR11991">
    <property type="entry name" value="TRANSLATIONALLY CONTROLLED TUMOR PROTEIN-RELATED"/>
    <property type="match status" value="1"/>
</dbReference>
<dbReference type="PANTHER" id="PTHR11991:SF0">
    <property type="entry name" value="TRANSLATIONALLY-CONTROLLED TUMOR PROTEIN"/>
    <property type="match status" value="1"/>
</dbReference>
<dbReference type="Pfam" id="PF00838">
    <property type="entry name" value="TCTP"/>
    <property type="match status" value="1"/>
</dbReference>
<dbReference type="PRINTS" id="PR01653">
    <property type="entry name" value="TCTPROTEIN"/>
</dbReference>
<dbReference type="SUPFAM" id="SSF51316">
    <property type="entry name" value="Mss4-like"/>
    <property type="match status" value="1"/>
</dbReference>
<dbReference type="PROSITE" id="PS01002">
    <property type="entry name" value="TCTP_1"/>
    <property type="match status" value="1"/>
</dbReference>
<dbReference type="PROSITE" id="PS01003">
    <property type="entry name" value="TCTP_2"/>
    <property type="match status" value="1"/>
</dbReference>
<dbReference type="PROSITE" id="PS51797">
    <property type="entry name" value="TCTP_3"/>
    <property type="match status" value="1"/>
</dbReference>
<organism>
    <name type="scientific">Caenorhabditis briggsae</name>
    <dbReference type="NCBI Taxonomy" id="6238"/>
    <lineage>
        <taxon>Eukaryota</taxon>
        <taxon>Metazoa</taxon>
        <taxon>Ecdysozoa</taxon>
        <taxon>Nematoda</taxon>
        <taxon>Chromadorea</taxon>
        <taxon>Rhabditida</taxon>
        <taxon>Rhabditina</taxon>
        <taxon>Rhabditomorpha</taxon>
        <taxon>Rhabditoidea</taxon>
        <taxon>Rhabditidae</taxon>
        <taxon>Peloderinae</taxon>
        <taxon>Caenorhabditis</taxon>
    </lineage>
</organism>
<feature type="chain" id="PRO_0000252303" description="Translationally-controlled tumor protein homolog">
    <location>
        <begin position="1"/>
        <end position="181"/>
    </location>
</feature>
<feature type="domain" description="TCTP" evidence="2">
    <location>
        <begin position="1"/>
        <end position="181"/>
    </location>
</feature>
<reference key="1">
    <citation type="journal article" date="2003" name="PLoS Biol.">
        <title>The genome sequence of Caenorhabditis briggsae: a platform for comparative genomics.</title>
        <authorList>
            <person name="Stein L.D."/>
            <person name="Bao Z."/>
            <person name="Blasiar D."/>
            <person name="Blumenthal T."/>
            <person name="Brent M.R."/>
            <person name="Chen N."/>
            <person name="Chinwalla A."/>
            <person name="Clarke L."/>
            <person name="Clee C."/>
            <person name="Coghlan A."/>
            <person name="Coulson A."/>
            <person name="D'Eustachio P."/>
            <person name="Fitch D.H.A."/>
            <person name="Fulton L.A."/>
            <person name="Fulton R.E."/>
            <person name="Griffiths-Jones S."/>
            <person name="Harris T.W."/>
            <person name="Hillier L.W."/>
            <person name="Kamath R."/>
            <person name="Kuwabara P.E."/>
            <person name="Mardis E.R."/>
            <person name="Marra M.A."/>
            <person name="Miner T.L."/>
            <person name="Minx P."/>
            <person name="Mullikin J.C."/>
            <person name="Plumb R.W."/>
            <person name="Rogers J."/>
            <person name="Schein J.E."/>
            <person name="Sohrmann M."/>
            <person name="Spieth J."/>
            <person name="Stajich J.E."/>
            <person name="Wei C."/>
            <person name="Willey D."/>
            <person name="Wilson R.K."/>
            <person name="Durbin R.M."/>
            <person name="Waterston R.H."/>
        </authorList>
    </citation>
    <scope>NUCLEOTIDE SEQUENCE [LARGE SCALE GENOMIC DNA]</scope>
    <source>
        <strain>AF16</strain>
    </source>
</reference>
<sequence>MLIYKDIFTDDELSSDSFPMKLVDDLIYEFKGRHVVRKEGDIILAGSNPSAEEGAEDEGSDEHVERGIDIVLNHKLVEMNCYEDASMFKAYIKKFMKNIIDHMEKNNRDKADVDAFKKKIQAWVVSLLAKDRFKNLAFFIGERAAEGAENGQVAIIEYRDVDGTEVPTLMLVKEAILEEKC</sequence>
<evidence type="ECO:0000250" key="1"/>
<evidence type="ECO:0000255" key="2">
    <source>
        <dbReference type="PROSITE-ProRule" id="PRU01133"/>
    </source>
</evidence>
<gene>
    <name type="primary">tct-1</name>
    <name type="ORF">CBG02259</name>
</gene>
<accession>Q622B7</accession>
<accession>A8WS56</accession>
<protein>
    <recommendedName>
        <fullName>Translationally-controlled tumor protein homolog</fullName>
        <shortName>TCTP</shortName>
    </recommendedName>
</protein>
<name>TCTP_CAEBR</name>
<keyword id="KW-0106">Calcium</keyword>
<keyword id="KW-0963">Cytoplasm</keyword>
<keyword id="KW-1185">Reference proteome</keyword>
<proteinExistence type="inferred from homology"/>
<comment type="function">
    <text evidence="1">Involved in calcium binding and microtubule stabilization.</text>
</comment>
<comment type="subcellular location">
    <subcellularLocation>
        <location evidence="1">Cytoplasm</location>
    </subcellularLocation>
</comment>
<comment type="similarity">
    <text evidence="2">Belongs to the TCTP family.</text>
</comment>